<organism evidence="2">
    <name type="scientific">Punica granatum</name>
    <name type="common">Pomegranate</name>
    <dbReference type="NCBI Taxonomy" id="22663"/>
    <lineage>
        <taxon>Eukaryota</taxon>
        <taxon>Viridiplantae</taxon>
        <taxon>Streptophyta</taxon>
        <taxon>Embryophyta</taxon>
        <taxon>Tracheophyta</taxon>
        <taxon>Spermatophyta</taxon>
        <taxon>Magnoliopsida</taxon>
        <taxon>eudicotyledons</taxon>
        <taxon>Gunneridae</taxon>
        <taxon>Pentapetalae</taxon>
        <taxon>rosids</taxon>
        <taxon>malvids</taxon>
        <taxon>Myrtales</taxon>
        <taxon>Lythraceae</taxon>
        <taxon>Punica</taxon>
    </lineage>
</organism>
<keyword id="KW-0020">Allergen</keyword>
<keyword id="KW-0903">Direct protein sequencing</keyword>
<reference evidence="3" key="1">
    <citation type="journal article" date="2017" name="J. Agric. Food Chem.">
        <title>Pomegranate cultivars: identification of the new IgE-binding protein Pommaclein and analysis of antioxidant variability.</title>
        <authorList>
            <person name="Tuppo L."/>
            <person name="Alessandri C."/>
            <person name="Pasquariello M.S."/>
            <person name="Petriccione M."/>
            <person name="Giangrieco I."/>
            <person name="Tamburrini M."/>
            <person name="Mari A."/>
            <person name="Ciardiello M.A."/>
        </authorList>
    </citation>
    <scope>PROTEIN SEQUENCE</scope>
    <scope>TISSUE SPECIFICITY</scope>
    <scope>ALLERGEN</scope>
    <source>
        <tissue evidence="2">Fruit</tissue>
    </source>
</reference>
<name>PMLN_PUNGR</name>
<protein>
    <recommendedName>
        <fullName evidence="2">Pommaclein</fullName>
    </recommendedName>
    <allergenName evidence="2">Pun g 7</allergenName>
</protein>
<feature type="chain" id="PRO_0000439406" description="Pommaclein" evidence="2">
    <location>
        <begin position="1"/>
        <end position="20" status="greater than"/>
    </location>
</feature>
<feature type="non-terminal residue">
    <location>
        <position position="20"/>
    </location>
</feature>
<proteinExistence type="evidence at protein level"/>
<dbReference type="Allergome" id="11614">
    <property type="allergen name" value="Pun g 7"/>
</dbReference>
<dbReference type="Proteomes" id="UP000515151">
    <property type="component" value="Unplaced"/>
</dbReference>
<accession>C0HKC0</accession>
<evidence type="ECO:0000269" key="1">
    <source>
    </source>
</evidence>
<evidence type="ECO:0000303" key="2">
    <source>
    </source>
</evidence>
<evidence type="ECO:0000305" key="3"/>
<comment type="tissue specificity">
    <text evidence="1">Expressed in pulp (aril) of fruits (at protein level).</text>
</comment>
<comment type="allergen">
    <text evidence="1">Causes an allergic reaction in human. Binds to IgE.</text>
</comment>
<comment type="similarity">
    <text evidence="3">Belongs to the GASA family.</text>
</comment>
<sequence>GSSFCDSKCAVRCSKAGVQD</sequence>